<gene>
    <name type="primary">dhrs7b</name>
    <name evidence="2" type="synonym">sdr32c1</name>
</gene>
<proteinExistence type="evidence at transcript level"/>
<evidence type="ECO:0000250" key="1">
    <source>
        <dbReference type="UniProtKB" id="Q5RJY4"/>
    </source>
</evidence>
<evidence type="ECO:0000250" key="2">
    <source>
        <dbReference type="UniProtKB" id="Q6IAN0"/>
    </source>
</evidence>
<evidence type="ECO:0000250" key="3">
    <source>
        <dbReference type="UniProtKB" id="Q99714"/>
    </source>
</evidence>
<evidence type="ECO:0000255" key="4"/>
<evidence type="ECO:0000255" key="5">
    <source>
        <dbReference type="PROSITE-ProRule" id="PRU10001"/>
    </source>
</evidence>
<evidence type="ECO:0000305" key="6"/>
<dbReference type="EC" id="1.1.-.-" evidence="6"/>
<dbReference type="EMBL" id="BC118856">
    <property type="protein sequence ID" value="AAI18857.1"/>
    <property type="molecule type" value="mRNA"/>
</dbReference>
<dbReference type="RefSeq" id="NP_001072246.1">
    <property type="nucleotide sequence ID" value="NM_001078778.1"/>
</dbReference>
<dbReference type="RefSeq" id="XP_012825989.1">
    <property type="nucleotide sequence ID" value="XM_012970535.3"/>
</dbReference>
<dbReference type="RefSeq" id="XP_012825990.1">
    <property type="nucleotide sequence ID" value="XM_012970536.3"/>
</dbReference>
<dbReference type="SMR" id="Q0VFE7"/>
<dbReference type="FunCoup" id="Q0VFE7">
    <property type="interactions" value="320"/>
</dbReference>
<dbReference type="STRING" id="8364.ENSXETP00000009786"/>
<dbReference type="PaxDb" id="8364-ENSXETP00000013330"/>
<dbReference type="DNASU" id="779695"/>
<dbReference type="GeneID" id="779695"/>
<dbReference type="KEGG" id="xtr:779695"/>
<dbReference type="AGR" id="Xenbase:XB-GENE-946473"/>
<dbReference type="CTD" id="25979"/>
<dbReference type="Xenbase" id="XB-GENE-946473">
    <property type="gene designation" value="dhrs7b"/>
</dbReference>
<dbReference type="eggNOG" id="KOG1205">
    <property type="taxonomic scope" value="Eukaryota"/>
</dbReference>
<dbReference type="HOGENOM" id="CLU_010194_2_1_1"/>
<dbReference type="InParanoid" id="Q0VFE7"/>
<dbReference type="OMA" id="YFWIMAK"/>
<dbReference type="OrthoDB" id="5307821at2759"/>
<dbReference type="Reactome" id="R-XTR-75896">
    <property type="pathway name" value="Plasmalogen biosynthesis"/>
</dbReference>
<dbReference type="Proteomes" id="UP000008143">
    <property type="component" value="Chromosome 9"/>
</dbReference>
<dbReference type="Bgee" id="ENSXETG00000006052">
    <property type="expression patterns" value="Expressed in skeletal muscle tissue and 13 other cell types or tissues"/>
</dbReference>
<dbReference type="ExpressionAtlas" id="Q0VFE7">
    <property type="expression patterns" value="baseline"/>
</dbReference>
<dbReference type="GO" id="GO:0005789">
    <property type="term" value="C:endoplasmic reticulum membrane"/>
    <property type="evidence" value="ECO:0007669"/>
    <property type="project" value="UniProtKB-SubCell"/>
</dbReference>
<dbReference type="GO" id="GO:0016491">
    <property type="term" value="F:oxidoreductase activity"/>
    <property type="evidence" value="ECO:0007669"/>
    <property type="project" value="UniProtKB-KW"/>
</dbReference>
<dbReference type="CDD" id="cd05332">
    <property type="entry name" value="11beta-HSD1_like_SDR_c"/>
    <property type="match status" value="1"/>
</dbReference>
<dbReference type="FunFam" id="3.40.50.720:FF:000122">
    <property type="entry name" value="Dehydrogenase/reductase SDR family member 7B"/>
    <property type="match status" value="1"/>
</dbReference>
<dbReference type="Gene3D" id="3.40.50.720">
    <property type="entry name" value="NAD(P)-binding Rossmann-like Domain"/>
    <property type="match status" value="1"/>
</dbReference>
<dbReference type="InterPro" id="IPR036291">
    <property type="entry name" value="NAD(P)-bd_dom_sf"/>
</dbReference>
<dbReference type="InterPro" id="IPR020904">
    <property type="entry name" value="Sc_DH/Rdtase_CS"/>
</dbReference>
<dbReference type="InterPro" id="IPR002347">
    <property type="entry name" value="SDR_fam"/>
</dbReference>
<dbReference type="NCBIfam" id="NF004825">
    <property type="entry name" value="PRK06181.1"/>
    <property type="match status" value="1"/>
</dbReference>
<dbReference type="PANTHER" id="PTHR44196">
    <property type="entry name" value="DEHYDROGENASE/REDUCTASE SDR FAMILY MEMBER 7B"/>
    <property type="match status" value="1"/>
</dbReference>
<dbReference type="PANTHER" id="PTHR44196:SF1">
    <property type="entry name" value="DEHYDROGENASE_REDUCTASE SDR FAMILY MEMBER 7B"/>
    <property type="match status" value="1"/>
</dbReference>
<dbReference type="Pfam" id="PF00106">
    <property type="entry name" value="adh_short"/>
    <property type="match status" value="1"/>
</dbReference>
<dbReference type="PIRSF" id="PIRSF000126">
    <property type="entry name" value="11-beta-HSD1"/>
    <property type="match status" value="1"/>
</dbReference>
<dbReference type="PRINTS" id="PR00081">
    <property type="entry name" value="GDHRDH"/>
</dbReference>
<dbReference type="PRINTS" id="PR00080">
    <property type="entry name" value="SDRFAMILY"/>
</dbReference>
<dbReference type="SMART" id="SM00822">
    <property type="entry name" value="PKS_KR"/>
    <property type="match status" value="1"/>
</dbReference>
<dbReference type="SUPFAM" id="SSF51735">
    <property type="entry name" value="NAD(P)-binding Rossmann-fold domains"/>
    <property type="match status" value="1"/>
</dbReference>
<dbReference type="PROSITE" id="PS00061">
    <property type="entry name" value="ADH_SHORT"/>
    <property type="match status" value="1"/>
</dbReference>
<organism>
    <name type="scientific">Xenopus tropicalis</name>
    <name type="common">Western clawed frog</name>
    <name type="synonym">Silurana tropicalis</name>
    <dbReference type="NCBI Taxonomy" id="8364"/>
    <lineage>
        <taxon>Eukaryota</taxon>
        <taxon>Metazoa</taxon>
        <taxon>Chordata</taxon>
        <taxon>Craniata</taxon>
        <taxon>Vertebrata</taxon>
        <taxon>Euteleostomi</taxon>
        <taxon>Amphibia</taxon>
        <taxon>Batrachia</taxon>
        <taxon>Anura</taxon>
        <taxon>Pipoidea</taxon>
        <taxon>Pipidae</taxon>
        <taxon>Xenopodinae</taxon>
        <taxon>Xenopus</taxon>
        <taxon>Silurana</taxon>
    </lineage>
</organism>
<comment type="function">
    <text evidence="6">Putative oxidoreductase.</text>
</comment>
<comment type="subcellular location">
    <subcellularLocation>
        <location evidence="1">Endoplasmic reticulum membrane</location>
        <topology evidence="1">Single-pass type II membrane protein</topology>
    </subcellularLocation>
</comment>
<comment type="similarity">
    <text evidence="6">Belongs to the short-chain dehydrogenases/reductases (SDR) family.</text>
</comment>
<feature type="chain" id="PRO_0000312111" description="Dehydrogenase/reductase SDR family member 7B">
    <location>
        <begin position="1"/>
        <end position="309"/>
    </location>
</feature>
<feature type="topological domain" description="Cytoplasmic" evidence="4">
    <location>
        <begin position="1"/>
        <end position="4"/>
    </location>
</feature>
<feature type="transmembrane region" description="Helical; Signal-anchor for type II membrane protein" evidence="4">
    <location>
        <begin position="5"/>
        <end position="25"/>
    </location>
</feature>
<feature type="topological domain" description="Lumenal" evidence="4">
    <location>
        <begin position="26"/>
        <end position="272"/>
    </location>
</feature>
<feature type="active site" description="Proton acceptor" evidence="5">
    <location>
        <position position="191"/>
    </location>
</feature>
<feature type="binding site" evidence="3">
    <location>
        <position position="46"/>
    </location>
    <ligand>
        <name>NAD(+)</name>
        <dbReference type="ChEBI" id="CHEBI:57540"/>
    </ligand>
</feature>
<feature type="binding site" evidence="3">
    <location>
        <position position="48"/>
    </location>
    <ligand>
        <name>NAD(+)</name>
        <dbReference type="ChEBI" id="CHEBI:57540"/>
    </ligand>
</feature>
<feature type="binding site" evidence="3">
    <location>
        <position position="178"/>
    </location>
    <ligand>
        <name>substrate</name>
    </ligand>
</feature>
<feature type="binding site" evidence="3">
    <location>
        <position position="191"/>
    </location>
    <ligand>
        <name>NAD(+)</name>
        <dbReference type="ChEBI" id="CHEBI:57540"/>
    </ligand>
</feature>
<feature type="binding site" evidence="3">
    <location>
        <position position="195"/>
    </location>
    <ligand>
        <name>NAD(+)</name>
        <dbReference type="ChEBI" id="CHEBI:57540"/>
    </ligand>
</feature>
<feature type="binding site" evidence="3">
    <location>
        <position position="226"/>
    </location>
    <ligand>
        <name>NAD(+)</name>
        <dbReference type="ChEBI" id="CHEBI:57540"/>
    </ligand>
</feature>
<accession>Q0VFE7</accession>
<reference key="1">
    <citation type="submission" date="2006-07" db="EMBL/GenBank/DDBJ databases">
        <authorList>
            <consortium name="NIH - Xenopus Gene Collection (XGC) project"/>
        </authorList>
    </citation>
    <scope>NUCLEOTIDE SEQUENCE [LARGE SCALE MRNA]</scope>
    <source>
        <tissue>Brain</tissue>
    </source>
</reference>
<keyword id="KW-0256">Endoplasmic reticulum</keyword>
<keyword id="KW-0472">Membrane</keyword>
<keyword id="KW-0520">NAD</keyword>
<keyword id="KW-0521">NADP</keyword>
<keyword id="KW-0560">Oxidoreductase</keyword>
<keyword id="KW-1185">Reference proteome</keyword>
<keyword id="KW-0735">Signal-anchor</keyword>
<keyword id="KW-0812">Transmembrane</keyword>
<keyword id="KW-1133">Transmembrane helix</keyword>
<sequence length="309" mass="33818">MDLTTWAIFPLLLGSIGVYSLYKLLQRLRSGAYLQDAVVVITGATSGLGRECAKVFYAAGTRLVLCGRSEEGLKNLVQELSQMRIKSAQLHKPHMVIFDLSDVEAVNSAANEILHLTGRVDILINNAGISYRGTILDTKVSVDRMVMDTNYFGPVALTKALIPSMIKNRRGHIVVISSVQGKISIPFRSAYSASKHATQAFFDCLRAEMSPYEIDVTVVNPGYIKTNLSLNAVTGDGSNYGVMDNNTAEGRTPEEVAQTVLRAVGERRKELLVAGLVPTLAVYLRTLAPTIFFSFMAARAKKERKLKDS</sequence>
<name>DRS7B_XENTR</name>
<protein>
    <recommendedName>
        <fullName evidence="2">Dehydrogenase/reductase SDR family member 7B</fullName>
        <ecNumber evidence="6">1.1.-.-</ecNumber>
    </recommendedName>
    <alternativeName>
        <fullName evidence="2">Short-chain dehydrogenase/reductase family 32C member 1</fullName>
        <shortName evidence="2">Protein SDR32C1</shortName>
    </alternativeName>
</protein>